<gene>
    <name evidence="2" type="primary">SUS1</name>
    <name type="ordered locus">KLLA0B09284g</name>
</gene>
<feature type="chain" id="PRO_0000367569" description="Transcription and mRNA export factor SUS1">
    <location>
        <begin position="1"/>
        <end position="96"/>
    </location>
</feature>
<protein>
    <recommendedName>
        <fullName evidence="2">Transcription and mRNA export factor SUS1</fullName>
    </recommendedName>
</protein>
<name>SUS1_KLULA</name>
<evidence type="ECO:0000250" key="1"/>
<evidence type="ECO:0000255" key="2">
    <source>
        <dbReference type="HAMAP-Rule" id="MF_03046"/>
    </source>
</evidence>
<keyword id="KW-0010">Activator</keyword>
<keyword id="KW-0156">Chromatin regulator</keyword>
<keyword id="KW-0963">Cytoplasm</keyword>
<keyword id="KW-0509">mRNA transport</keyword>
<keyword id="KW-0539">Nucleus</keyword>
<keyword id="KW-0653">Protein transport</keyword>
<keyword id="KW-1185">Reference proteome</keyword>
<keyword id="KW-0804">Transcription</keyword>
<keyword id="KW-0805">Transcription regulation</keyword>
<keyword id="KW-0811">Translocation</keyword>
<keyword id="KW-0813">Transport</keyword>
<sequence length="96" mass="11414">MKYFNGLFSIFFFLLLTNYLNFNSRISNQLNQMLLDDGWIDKVKQLTREEMERSDSTNFVDILNKVEPQALNMVNDKTRTEILQTIKEFLNDIVEV</sequence>
<organism>
    <name type="scientific">Kluyveromyces lactis (strain ATCC 8585 / CBS 2359 / DSM 70799 / NBRC 1267 / NRRL Y-1140 / WM37)</name>
    <name type="common">Yeast</name>
    <name type="synonym">Candida sphaerica</name>
    <dbReference type="NCBI Taxonomy" id="284590"/>
    <lineage>
        <taxon>Eukaryota</taxon>
        <taxon>Fungi</taxon>
        <taxon>Dikarya</taxon>
        <taxon>Ascomycota</taxon>
        <taxon>Saccharomycotina</taxon>
        <taxon>Saccharomycetes</taxon>
        <taxon>Saccharomycetales</taxon>
        <taxon>Saccharomycetaceae</taxon>
        <taxon>Kluyveromyces</taxon>
    </lineage>
</organism>
<dbReference type="EMBL" id="CR382122">
    <property type="protein sequence ID" value="CAH02335.1"/>
    <property type="molecule type" value="Genomic_DNA"/>
</dbReference>
<dbReference type="RefSeq" id="XP_451942.1">
    <property type="nucleotide sequence ID" value="XM_451942.1"/>
</dbReference>
<dbReference type="SMR" id="Q6CVU7"/>
<dbReference type="FunCoup" id="Q6CVU7">
    <property type="interactions" value="377"/>
</dbReference>
<dbReference type="STRING" id="284590.Q6CVU7"/>
<dbReference type="PaxDb" id="284590-Q6CVU7"/>
<dbReference type="KEGG" id="kla:KLLA0_B09284g"/>
<dbReference type="eggNOG" id="ENOG502S9WJ">
    <property type="taxonomic scope" value="Eukaryota"/>
</dbReference>
<dbReference type="HOGENOM" id="CLU_2360037_0_0_1"/>
<dbReference type="InParanoid" id="Q6CVU7"/>
<dbReference type="OMA" id="YESGWFD"/>
<dbReference type="Proteomes" id="UP000000598">
    <property type="component" value="Chromosome B"/>
</dbReference>
<dbReference type="GO" id="GO:0071819">
    <property type="term" value="C:DUBm complex"/>
    <property type="evidence" value="ECO:0007669"/>
    <property type="project" value="UniProtKB-UniRule"/>
</dbReference>
<dbReference type="GO" id="GO:0005643">
    <property type="term" value="C:nuclear pore"/>
    <property type="evidence" value="ECO:0007669"/>
    <property type="project" value="UniProtKB-UniRule"/>
</dbReference>
<dbReference type="GO" id="GO:0005654">
    <property type="term" value="C:nucleoplasm"/>
    <property type="evidence" value="ECO:0007669"/>
    <property type="project" value="UniProtKB-SubCell"/>
</dbReference>
<dbReference type="GO" id="GO:0000932">
    <property type="term" value="C:P-body"/>
    <property type="evidence" value="ECO:0007669"/>
    <property type="project" value="UniProtKB-SubCell"/>
</dbReference>
<dbReference type="GO" id="GO:0000124">
    <property type="term" value="C:SAGA complex"/>
    <property type="evidence" value="ECO:0007669"/>
    <property type="project" value="UniProtKB-UniRule"/>
</dbReference>
<dbReference type="GO" id="GO:0070390">
    <property type="term" value="C:transcription export complex 2"/>
    <property type="evidence" value="ECO:0007669"/>
    <property type="project" value="UniProtKB-UniRule"/>
</dbReference>
<dbReference type="GO" id="GO:0003713">
    <property type="term" value="F:transcription coactivator activity"/>
    <property type="evidence" value="ECO:0007669"/>
    <property type="project" value="UniProtKB-UniRule"/>
</dbReference>
<dbReference type="GO" id="GO:0006325">
    <property type="term" value="P:chromatin organization"/>
    <property type="evidence" value="ECO:0007669"/>
    <property type="project" value="UniProtKB-KW"/>
</dbReference>
<dbReference type="GO" id="GO:0006406">
    <property type="term" value="P:mRNA export from nucleus"/>
    <property type="evidence" value="ECO:0007669"/>
    <property type="project" value="UniProtKB-UniRule"/>
</dbReference>
<dbReference type="GO" id="GO:0015031">
    <property type="term" value="P:protein transport"/>
    <property type="evidence" value="ECO:0007669"/>
    <property type="project" value="UniProtKB-KW"/>
</dbReference>
<dbReference type="GO" id="GO:0006368">
    <property type="term" value="P:transcription elongation by RNA polymerase II"/>
    <property type="evidence" value="ECO:0007669"/>
    <property type="project" value="UniProtKB-UniRule"/>
</dbReference>
<dbReference type="Gene3D" id="1.10.246.140">
    <property type="match status" value="1"/>
</dbReference>
<dbReference type="HAMAP" id="MF_03046">
    <property type="entry name" value="ENY2_Sus1"/>
    <property type="match status" value="1"/>
</dbReference>
<dbReference type="InterPro" id="IPR018783">
    <property type="entry name" value="TF_ENY2"/>
</dbReference>
<dbReference type="InterPro" id="IPR038212">
    <property type="entry name" value="TF_EnY2_sf"/>
</dbReference>
<dbReference type="Pfam" id="PF10163">
    <property type="entry name" value="EnY2"/>
    <property type="match status" value="1"/>
</dbReference>
<comment type="function">
    <text evidence="1">Involved in mRNA export coupled transcription activation by association with both the TREX-2 and the SAGA complexes. At the promoters, SAGA is required for recruitment of the basal transcription machinery. It influences RNA polymerase II transcriptional activity through different activities such as TBP interaction and promoter selectivity, interaction with transcription activators, and chromatin modification through histone acetylation and deubiquitination. Within the SAGA complex, participates in a subcomplex required for deubiquitination of H2B and for the maintenance of steady-state H3 methylation levels. The TREX-2 complex functions in docking export-competent ribonucleoprotein particles (mRNPs) to the nuclear entrance of the nuclear pore complex (nuclear basket). TREX-2 participates in mRNA export and accurate chromatin positioning in the nucleus by tethering genes to the nuclear periphery. May also be involved in cytoplasmic mRNA decay by interaction with components of P-bodies (By similarity).</text>
</comment>
<comment type="subunit">
    <text evidence="2">Component of the nuclear pore complex (NPC)-associated TREX-2 complex (transcription and export complex 2), composed of at least SUS1, SAC3, THP1, SEM1, and CDC31. TREX-2 contains 2 SUS1 chains. The TREX-2 complex interacts with the nucleoporin NUP1. Component of the 1.8 MDa SAGA transcription coactivator-HAT complex. SAGA is built of 5 distinct domains with specialized functions. Within the SAGA complex, SUS1, SGF11, SGF73 and UBP8 form an additional subcomplex of SAGA called the DUB module (deubiquitination module). Interacts directly with THP1, SAC3, SGF11, and with the RNA polymerase II.</text>
</comment>
<comment type="subcellular location">
    <subcellularLocation>
        <location evidence="2">Nucleus</location>
        <location evidence="2">Nucleoplasm</location>
    </subcellularLocation>
    <subcellularLocation>
        <location evidence="2">Cytoplasm</location>
        <location evidence="2">P-body</location>
    </subcellularLocation>
</comment>
<comment type="similarity">
    <text evidence="2">Belongs to the ENY2 family.</text>
</comment>
<accession>Q6CVU7</accession>
<proteinExistence type="inferred from homology"/>
<reference key="1">
    <citation type="journal article" date="2004" name="Nature">
        <title>Genome evolution in yeasts.</title>
        <authorList>
            <person name="Dujon B."/>
            <person name="Sherman D."/>
            <person name="Fischer G."/>
            <person name="Durrens P."/>
            <person name="Casaregola S."/>
            <person name="Lafontaine I."/>
            <person name="de Montigny J."/>
            <person name="Marck C."/>
            <person name="Neuveglise C."/>
            <person name="Talla E."/>
            <person name="Goffard N."/>
            <person name="Frangeul L."/>
            <person name="Aigle M."/>
            <person name="Anthouard V."/>
            <person name="Babour A."/>
            <person name="Barbe V."/>
            <person name="Barnay S."/>
            <person name="Blanchin S."/>
            <person name="Beckerich J.-M."/>
            <person name="Beyne E."/>
            <person name="Bleykasten C."/>
            <person name="Boisrame A."/>
            <person name="Boyer J."/>
            <person name="Cattolico L."/>
            <person name="Confanioleri F."/>
            <person name="de Daruvar A."/>
            <person name="Despons L."/>
            <person name="Fabre E."/>
            <person name="Fairhead C."/>
            <person name="Ferry-Dumazet H."/>
            <person name="Groppi A."/>
            <person name="Hantraye F."/>
            <person name="Hennequin C."/>
            <person name="Jauniaux N."/>
            <person name="Joyet P."/>
            <person name="Kachouri R."/>
            <person name="Kerrest A."/>
            <person name="Koszul R."/>
            <person name="Lemaire M."/>
            <person name="Lesur I."/>
            <person name="Ma L."/>
            <person name="Muller H."/>
            <person name="Nicaud J.-M."/>
            <person name="Nikolski M."/>
            <person name="Oztas S."/>
            <person name="Ozier-Kalogeropoulos O."/>
            <person name="Pellenz S."/>
            <person name="Potier S."/>
            <person name="Richard G.-F."/>
            <person name="Straub M.-L."/>
            <person name="Suleau A."/>
            <person name="Swennen D."/>
            <person name="Tekaia F."/>
            <person name="Wesolowski-Louvel M."/>
            <person name="Westhof E."/>
            <person name="Wirth B."/>
            <person name="Zeniou-Meyer M."/>
            <person name="Zivanovic Y."/>
            <person name="Bolotin-Fukuhara M."/>
            <person name="Thierry A."/>
            <person name="Bouchier C."/>
            <person name="Caudron B."/>
            <person name="Scarpelli C."/>
            <person name="Gaillardin C."/>
            <person name="Weissenbach J."/>
            <person name="Wincker P."/>
            <person name="Souciet J.-L."/>
        </authorList>
    </citation>
    <scope>NUCLEOTIDE SEQUENCE [LARGE SCALE GENOMIC DNA]</scope>
    <source>
        <strain>ATCC 8585 / CBS 2359 / DSM 70799 / NBRC 1267 / NRRL Y-1140 / WM37</strain>
    </source>
</reference>